<protein>
    <recommendedName>
        <fullName>Beta-defensin 9</fullName>
        <shortName>BD-9</shortName>
    </recommendedName>
    <alternativeName>
        <fullName>Defensin, beta 9</fullName>
    </alternativeName>
</protein>
<organism>
    <name type="scientific">Rattus norvegicus</name>
    <name type="common">Rat</name>
    <dbReference type="NCBI Taxonomy" id="10116"/>
    <lineage>
        <taxon>Eukaryota</taxon>
        <taxon>Metazoa</taxon>
        <taxon>Chordata</taxon>
        <taxon>Craniata</taxon>
        <taxon>Vertebrata</taxon>
        <taxon>Euteleostomi</taxon>
        <taxon>Mammalia</taxon>
        <taxon>Eutheria</taxon>
        <taxon>Euarchontoglires</taxon>
        <taxon>Glires</taxon>
        <taxon>Rodentia</taxon>
        <taxon>Myomorpha</taxon>
        <taxon>Muroidea</taxon>
        <taxon>Muridae</taxon>
        <taxon>Murinae</taxon>
        <taxon>Rattus</taxon>
    </lineage>
</organism>
<sequence>MRTLCSLLLICCLLFSYDTPVVGELKHLGLKTEFEQCQRIRGYCLNTYCRFPTSHVGSCYPEKRYCCKNIR</sequence>
<comment type="function">
    <text evidence="1">Has antibacterial activity.</text>
</comment>
<comment type="subcellular location">
    <subcellularLocation>
        <location evidence="1">Secreted</location>
    </subcellularLocation>
</comment>
<comment type="similarity">
    <text evidence="3">Belongs to the beta-defensin family.</text>
</comment>
<proteinExistence type="inferred from homology"/>
<feature type="signal peptide" evidence="2">
    <location>
        <begin position="1"/>
        <end position="23"/>
    </location>
</feature>
<feature type="chain" id="PRO_0000352694" description="Beta-defensin 9">
    <location>
        <begin position="24"/>
        <end position="71"/>
    </location>
</feature>
<feature type="disulfide bond" evidence="1">
    <location>
        <begin position="37"/>
        <end position="66"/>
    </location>
</feature>
<feature type="disulfide bond" evidence="1">
    <location>
        <begin position="44"/>
        <end position="59"/>
    </location>
</feature>
<feature type="disulfide bond" evidence="1">
    <location>
        <begin position="49"/>
        <end position="67"/>
    </location>
</feature>
<accession>Q32ZI2</accession>
<dbReference type="EMBL" id="AY621341">
    <property type="protein sequence ID" value="AAT51880.1"/>
    <property type="molecule type" value="mRNA"/>
</dbReference>
<dbReference type="RefSeq" id="NP_001032598.1">
    <property type="nucleotide sequence ID" value="NM_001037509.2"/>
</dbReference>
<dbReference type="SMR" id="Q32ZI2"/>
<dbReference type="FunCoup" id="Q32ZI2">
    <property type="interactions" value="53"/>
</dbReference>
<dbReference type="STRING" id="10116.ENSRNOP00000054869"/>
<dbReference type="PaxDb" id="10116-ENSRNOP00000054869"/>
<dbReference type="Ensembl" id="ENSRNOT00000058061.3">
    <property type="protein sequence ID" value="ENSRNOP00000054869.3"/>
    <property type="gene ID" value="ENSRNOG00000038149.3"/>
</dbReference>
<dbReference type="GeneID" id="641633"/>
<dbReference type="KEGG" id="rno:641633"/>
<dbReference type="UCSC" id="RGD:1563138">
    <property type="organism name" value="rat"/>
</dbReference>
<dbReference type="AGR" id="RGD:1563138"/>
<dbReference type="CTD" id="246079"/>
<dbReference type="RGD" id="1563138">
    <property type="gene designation" value="Defb9"/>
</dbReference>
<dbReference type="GeneTree" id="ENSGT00940000165558"/>
<dbReference type="HOGENOM" id="CLU_189296_1_0_1"/>
<dbReference type="InParanoid" id="Q32ZI2"/>
<dbReference type="OMA" id="CCINMKE"/>
<dbReference type="OrthoDB" id="9606199at2759"/>
<dbReference type="PhylomeDB" id="Q32ZI2"/>
<dbReference type="PRO" id="PR:Q32ZI2"/>
<dbReference type="Proteomes" id="UP000002494">
    <property type="component" value="Chromosome 16"/>
</dbReference>
<dbReference type="GO" id="GO:0005615">
    <property type="term" value="C:extracellular space"/>
    <property type="evidence" value="ECO:0000318"/>
    <property type="project" value="GO_Central"/>
</dbReference>
<dbReference type="GO" id="GO:0031731">
    <property type="term" value="F:CCR6 chemokine receptor binding"/>
    <property type="evidence" value="ECO:0000318"/>
    <property type="project" value="GO_Central"/>
</dbReference>
<dbReference type="GO" id="GO:0050829">
    <property type="term" value="P:defense response to Gram-negative bacterium"/>
    <property type="evidence" value="ECO:0000318"/>
    <property type="project" value="GO_Central"/>
</dbReference>
<dbReference type="GO" id="GO:0050830">
    <property type="term" value="P:defense response to Gram-positive bacterium"/>
    <property type="evidence" value="ECO:0000318"/>
    <property type="project" value="GO_Central"/>
</dbReference>
<dbReference type="GO" id="GO:0002227">
    <property type="term" value="P:innate immune response in mucosa"/>
    <property type="evidence" value="ECO:0000318"/>
    <property type="project" value="GO_Central"/>
</dbReference>
<dbReference type="InterPro" id="IPR001855">
    <property type="entry name" value="Defensin_beta-like"/>
</dbReference>
<dbReference type="PANTHER" id="PTHR21388:SF4">
    <property type="entry name" value="BETA-DEFENSIN 10-RELATED"/>
    <property type="match status" value="1"/>
</dbReference>
<dbReference type="PANTHER" id="PTHR21388">
    <property type="entry name" value="BETA-DEFENSIN-RELATED"/>
    <property type="match status" value="1"/>
</dbReference>
<dbReference type="Pfam" id="PF00711">
    <property type="entry name" value="Defensin_beta"/>
    <property type="match status" value="1"/>
</dbReference>
<dbReference type="SUPFAM" id="SSF57392">
    <property type="entry name" value="Defensin-like"/>
    <property type="match status" value="1"/>
</dbReference>
<evidence type="ECO:0000250" key="1"/>
<evidence type="ECO:0000255" key="2"/>
<evidence type="ECO:0000305" key="3"/>
<gene>
    <name type="primary">Defb9</name>
</gene>
<reference key="1">
    <citation type="journal article" date="2005" name="Physiol. Genomics">
        <title>Cross-species analysis of the mammalian beta-defensin gene family: presence of syntenic gene clusters and preferential expression in the male reproductive tract.</title>
        <authorList>
            <person name="Patil A.A."/>
            <person name="Cai Y."/>
            <person name="Sang Y."/>
            <person name="Blecha F."/>
            <person name="Zhang G."/>
        </authorList>
    </citation>
    <scope>NUCLEOTIDE SEQUENCE [MRNA]</scope>
</reference>
<keyword id="KW-0044">Antibiotic</keyword>
<keyword id="KW-0929">Antimicrobial</keyword>
<keyword id="KW-0211">Defensin</keyword>
<keyword id="KW-1015">Disulfide bond</keyword>
<keyword id="KW-1185">Reference proteome</keyword>
<keyword id="KW-0964">Secreted</keyword>
<keyword id="KW-0732">Signal</keyword>
<name>DEFB9_RAT</name>